<organism>
    <name type="scientific">Shewanella sp. (strain W3-18-1)</name>
    <dbReference type="NCBI Taxonomy" id="351745"/>
    <lineage>
        <taxon>Bacteria</taxon>
        <taxon>Pseudomonadati</taxon>
        <taxon>Pseudomonadota</taxon>
        <taxon>Gammaproteobacteria</taxon>
        <taxon>Alteromonadales</taxon>
        <taxon>Shewanellaceae</taxon>
        <taxon>Shewanella</taxon>
    </lineage>
</organism>
<keyword id="KW-0963">Cytoplasm</keyword>
<keyword id="KW-0224">Dipeptidase</keyword>
<keyword id="KW-0378">Hydrolase</keyword>
<keyword id="KW-0645">Protease</keyword>
<keyword id="KW-0720">Serine protease</keyword>
<comment type="function">
    <text evidence="1">Hydrolyzes dipeptides containing N-terminal aspartate residues. May play a role in allowing the cell to use peptide aspartate to spare carbon otherwise required for the synthesis of the aspartate family of amino acids.</text>
</comment>
<comment type="catalytic activity">
    <reaction evidence="1">
        <text>Dipeptidase E catalyzes the hydrolysis of dipeptides Asp-|-Xaa. It does not act on peptides with N-terminal Glu, Asn or Gln, nor does it cleave isoaspartyl peptides.</text>
        <dbReference type="EC" id="3.4.13.21"/>
    </reaction>
</comment>
<comment type="subcellular location">
    <subcellularLocation>
        <location evidence="1">Cytoplasm</location>
    </subcellularLocation>
</comment>
<comment type="similarity">
    <text evidence="1">Belongs to the peptidase S51 family.</text>
</comment>
<sequence>MTINALLLSSSRVGDTPYLAHAIPFIKPLTTQAQKWIFIPYAGVSMSYDNYLASVVMGLAELNLDISGIHQHPDPCQAIKDADGILIGGGNTFHLLHELYRYNLINLIREKVAQGTPYVGWSAGANVSGASIKTTNDMPIIEPPSFDALKIVPFQLNPHYSNYRTPGHNGETRAQRLLEFTKVEPLTPVIAIAEGSALWRRDNTLVLLGKNPAYLFCGEQQEMLIPIGSDLSHLLK</sequence>
<accession>A1RIL5</accession>
<evidence type="ECO:0000255" key="1">
    <source>
        <dbReference type="HAMAP-Rule" id="MF_00510"/>
    </source>
</evidence>
<protein>
    <recommendedName>
        <fullName evidence="1">Peptidase E</fullName>
        <ecNumber evidence="1">3.4.13.21</ecNumber>
    </recommendedName>
    <alternativeName>
        <fullName evidence="1">Alpha-aspartyl dipeptidase</fullName>
    </alternativeName>
    <alternativeName>
        <fullName evidence="1">Asp-specific dipeptidase</fullName>
    </alternativeName>
    <alternativeName>
        <fullName evidence="1">Dipeptidase E</fullName>
    </alternativeName>
</protein>
<feature type="chain" id="PRO_1000050621" description="Peptidase E">
    <location>
        <begin position="1"/>
        <end position="236"/>
    </location>
</feature>
<feature type="active site" description="Charge relay system" evidence="1">
    <location>
        <position position="122"/>
    </location>
</feature>
<feature type="active site" description="Charge relay system" evidence="1">
    <location>
        <position position="137"/>
    </location>
</feature>
<feature type="active site" description="Charge relay system" evidence="1">
    <location>
        <position position="159"/>
    </location>
</feature>
<dbReference type="EC" id="3.4.13.21" evidence="1"/>
<dbReference type="EMBL" id="CP000503">
    <property type="protein sequence ID" value="ABM24510.1"/>
    <property type="molecule type" value="Genomic_DNA"/>
</dbReference>
<dbReference type="RefSeq" id="WP_011789008.1">
    <property type="nucleotide sequence ID" value="NC_008750.1"/>
</dbReference>
<dbReference type="SMR" id="A1RIL5"/>
<dbReference type="MEROPS" id="S51.001"/>
<dbReference type="KEGG" id="shw:Sputw3181_1673"/>
<dbReference type="HOGENOM" id="CLU_071689_0_0_6"/>
<dbReference type="Proteomes" id="UP000002597">
    <property type="component" value="Chromosome"/>
</dbReference>
<dbReference type="GO" id="GO:0005737">
    <property type="term" value="C:cytoplasm"/>
    <property type="evidence" value="ECO:0007669"/>
    <property type="project" value="UniProtKB-SubCell"/>
</dbReference>
<dbReference type="GO" id="GO:0016805">
    <property type="term" value="F:dipeptidase activity"/>
    <property type="evidence" value="ECO:0007669"/>
    <property type="project" value="UniProtKB-UniRule"/>
</dbReference>
<dbReference type="GO" id="GO:0008236">
    <property type="term" value="F:serine-type peptidase activity"/>
    <property type="evidence" value="ECO:0007669"/>
    <property type="project" value="UniProtKB-KW"/>
</dbReference>
<dbReference type="GO" id="GO:0006508">
    <property type="term" value="P:proteolysis"/>
    <property type="evidence" value="ECO:0007669"/>
    <property type="project" value="UniProtKB-UniRule"/>
</dbReference>
<dbReference type="CDD" id="cd03146">
    <property type="entry name" value="GAT1_Peptidase_E"/>
    <property type="match status" value="1"/>
</dbReference>
<dbReference type="FunFam" id="3.40.50.880:FF:000007">
    <property type="entry name" value="Peptidase E"/>
    <property type="match status" value="1"/>
</dbReference>
<dbReference type="Gene3D" id="3.40.50.880">
    <property type="match status" value="1"/>
</dbReference>
<dbReference type="HAMAP" id="MF_00510">
    <property type="entry name" value="Peptidase_E"/>
    <property type="match status" value="1"/>
</dbReference>
<dbReference type="InterPro" id="IPR029062">
    <property type="entry name" value="Class_I_gatase-like"/>
</dbReference>
<dbReference type="InterPro" id="IPR005320">
    <property type="entry name" value="Peptidase_S51"/>
</dbReference>
<dbReference type="InterPro" id="IPR023172">
    <property type="entry name" value="Peptidase_S51_dipeptidase-E"/>
</dbReference>
<dbReference type="NCBIfam" id="NF003642">
    <property type="entry name" value="PRK05282.1"/>
    <property type="match status" value="1"/>
</dbReference>
<dbReference type="PANTHER" id="PTHR20842:SF0">
    <property type="entry name" value="ALPHA-ASPARTYL DIPEPTIDASE"/>
    <property type="match status" value="1"/>
</dbReference>
<dbReference type="PANTHER" id="PTHR20842">
    <property type="entry name" value="PROTEASE S51 ALPHA-ASPARTYL DIPEPTIDASE"/>
    <property type="match status" value="1"/>
</dbReference>
<dbReference type="Pfam" id="PF03575">
    <property type="entry name" value="Peptidase_S51"/>
    <property type="match status" value="1"/>
</dbReference>
<dbReference type="SUPFAM" id="SSF52317">
    <property type="entry name" value="Class I glutamine amidotransferase-like"/>
    <property type="match status" value="1"/>
</dbReference>
<reference key="1">
    <citation type="submission" date="2006-12" db="EMBL/GenBank/DDBJ databases">
        <title>Complete sequence of Shewanella sp. W3-18-1.</title>
        <authorList>
            <consortium name="US DOE Joint Genome Institute"/>
            <person name="Copeland A."/>
            <person name="Lucas S."/>
            <person name="Lapidus A."/>
            <person name="Barry K."/>
            <person name="Detter J.C."/>
            <person name="Glavina del Rio T."/>
            <person name="Hammon N."/>
            <person name="Israni S."/>
            <person name="Dalin E."/>
            <person name="Tice H."/>
            <person name="Pitluck S."/>
            <person name="Chain P."/>
            <person name="Malfatti S."/>
            <person name="Shin M."/>
            <person name="Vergez L."/>
            <person name="Schmutz J."/>
            <person name="Larimer F."/>
            <person name="Land M."/>
            <person name="Hauser L."/>
            <person name="Kyrpides N."/>
            <person name="Lykidis A."/>
            <person name="Tiedje J."/>
            <person name="Richardson P."/>
        </authorList>
    </citation>
    <scope>NUCLEOTIDE SEQUENCE [LARGE SCALE GENOMIC DNA]</scope>
    <source>
        <strain>W3-18-1</strain>
    </source>
</reference>
<proteinExistence type="inferred from homology"/>
<name>PEPE_SHESW</name>
<gene>
    <name evidence="1" type="primary">pepE</name>
    <name type="ordered locus">Sputw3181_1673</name>
</gene>